<keyword id="KW-0224">Dipeptidase</keyword>
<keyword id="KW-0378">Hydrolase</keyword>
<keyword id="KW-0464">Manganese</keyword>
<keyword id="KW-0479">Metal-binding</keyword>
<keyword id="KW-0482">Metalloprotease</keyword>
<keyword id="KW-0645">Protease</keyword>
<keyword id="KW-1185">Reference proteome</keyword>
<sequence length="440" mass="50150">MDQLAHHFSEHIVELNRRVAEIIAREKLSGLVIHSGQHHRQFLDDMNYPFKVNPQFKAWVPVIDNPNCWLIVNGRDKPTLVFYRPVDFWHKVSDVPDAFWTEHVDIKLLTKADRVAEFLPKDITNWAYLGEHLDVADVLGFTSRNPDAVMNYLHYHRASKTQYELECMRQANKIAVKGHQAAKNAFYNGGSEFEIQQQYLSSVGQTVNEVPYGNIVALNQNAAILHYTALEHTKPAQRLSFLLDAGANFHGYASDITRTYAFEKNSFCDLISALNAVELAIIDRIKPGVKYTDLHIETHHHIAQLLLDFNLATGDAAGLVDQGITNVFFPHGLGHMLGLQVHDMGGYLHDERGTHIPAPEAHPYLRCTRTLEANQVLTIEPGLYIIDSLLDELKQDSRKQQINWDQVAHFRPFGGIRIEDNVIVHQDRNENMTREFGLID</sequence>
<evidence type="ECO:0000255" key="1">
    <source>
        <dbReference type="HAMAP-Rule" id="MF_01279"/>
    </source>
</evidence>
<reference key="1">
    <citation type="submission" date="2006-03" db="EMBL/GenBank/DDBJ databases">
        <title>Complete sequence of Shewanella denitrificans OS217.</title>
        <authorList>
            <consortium name="US DOE Joint Genome Institute"/>
            <person name="Copeland A."/>
            <person name="Lucas S."/>
            <person name="Lapidus A."/>
            <person name="Barry K."/>
            <person name="Detter J.C."/>
            <person name="Glavina del Rio T."/>
            <person name="Hammon N."/>
            <person name="Israni S."/>
            <person name="Dalin E."/>
            <person name="Tice H."/>
            <person name="Pitluck S."/>
            <person name="Brettin T."/>
            <person name="Bruce D."/>
            <person name="Han C."/>
            <person name="Tapia R."/>
            <person name="Gilna P."/>
            <person name="Kiss H."/>
            <person name="Schmutz J."/>
            <person name="Larimer F."/>
            <person name="Land M."/>
            <person name="Hauser L."/>
            <person name="Kyrpides N."/>
            <person name="Lykidis A."/>
            <person name="Richardson P."/>
        </authorList>
    </citation>
    <scope>NUCLEOTIDE SEQUENCE [LARGE SCALE GENOMIC DNA]</scope>
    <source>
        <strain>OS217 / ATCC BAA-1090 / DSM 15013</strain>
    </source>
</reference>
<feature type="chain" id="PRO_0000303858" description="Xaa-Pro dipeptidase">
    <location>
        <begin position="1"/>
        <end position="440"/>
    </location>
</feature>
<feature type="binding site" evidence="1">
    <location>
        <position position="244"/>
    </location>
    <ligand>
        <name>Mn(2+)</name>
        <dbReference type="ChEBI" id="CHEBI:29035"/>
        <label>2</label>
    </ligand>
</feature>
<feature type="binding site" evidence="1">
    <location>
        <position position="255"/>
    </location>
    <ligand>
        <name>Mn(2+)</name>
        <dbReference type="ChEBI" id="CHEBI:29035"/>
        <label>1</label>
    </ligand>
</feature>
<feature type="binding site" evidence="1">
    <location>
        <position position="255"/>
    </location>
    <ligand>
        <name>Mn(2+)</name>
        <dbReference type="ChEBI" id="CHEBI:29035"/>
        <label>2</label>
    </ligand>
</feature>
<feature type="binding site" evidence="1">
    <location>
        <position position="335"/>
    </location>
    <ligand>
        <name>Mn(2+)</name>
        <dbReference type="ChEBI" id="CHEBI:29035"/>
        <label>1</label>
    </ligand>
</feature>
<feature type="binding site" evidence="1">
    <location>
        <position position="380"/>
    </location>
    <ligand>
        <name>Mn(2+)</name>
        <dbReference type="ChEBI" id="CHEBI:29035"/>
        <label>1</label>
    </ligand>
</feature>
<feature type="binding site" evidence="1">
    <location>
        <position position="419"/>
    </location>
    <ligand>
        <name>Mn(2+)</name>
        <dbReference type="ChEBI" id="CHEBI:29035"/>
        <label>1</label>
    </ligand>
</feature>
<feature type="binding site" evidence="1">
    <location>
        <position position="419"/>
    </location>
    <ligand>
        <name>Mn(2+)</name>
        <dbReference type="ChEBI" id="CHEBI:29035"/>
        <label>2</label>
    </ligand>
</feature>
<protein>
    <recommendedName>
        <fullName evidence="1">Xaa-Pro dipeptidase</fullName>
        <shortName evidence="1">X-Pro dipeptidase</shortName>
        <ecNumber evidence="1">3.4.13.9</ecNumber>
    </recommendedName>
    <alternativeName>
        <fullName evidence="1">Imidodipeptidase</fullName>
    </alternativeName>
    <alternativeName>
        <fullName evidence="1">Proline dipeptidase</fullName>
        <shortName evidence="1">Prolidase</shortName>
    </alternativeName>
</protein>
<proteinExistence type="inferred from homology"/>
<comment type="function">
    <text evidence="1">Splits dipeptides with a prolyl residue in the C-terminal position.</text>
</comment>
<comment type="catalytic activity">
    <reaction evidence="1">
        <text>Xaa-L-Pro dipeptide + H2O = an L-alpha-amino acid + L-proline</text>
        <dbReference type="Rhea" id="RHEA:76407"/>
        <dbReference type="ChEBI" id="CHEBI:15377"/>
        <dbReference type="ChEBI" id="CHEBI:59869"/>
        <dbReference type="ChEBI" id="CHEBI:60039"/>
        <dbReference type="ChEBI" id="CHEBI:195196"/>
        <dbReference type="EC" id="3.4.13.9"/>
    </reaction>
</comment>
<comment type="cofactor">
    <cofactor evidence="1">
        <name>Mn(2+)</name>
        <dbReference type="ChEBI" id="CHEBI:29035"/>
    </cofactor>
    <text evidence="1">Binds 2 manganese ions per subunit.</text>
</comment>
<comment type="similarity">
    <text evidence="1">Belongs to the peptidase M24B family. Bacterial-type prolidase subfamily.</text>
</comment>
<gene>
    <name evidence="1" type="primary">pepQ</name>
    <name type="ordered locus">Sden_0016</name>
</gene>
<organism>
    <name type="scientific">Shewanella denitrificans (strain OS217 / ATCC BAA-1090 / DSM 15013)</name>
    <dbReference type="NCBI Taxonomy" id="318161"/>
    <lineage>
        <taxon>Bacteria</taxon>
        <taxon>Pseudomonadati</taxon>
        <taxon>Pseudomonadota</taxon>
        <taxon>Gammaproteobacteria</taxon>
        <taxon>Alteromonadales</taxon>
        <taxon>Shewanellaceae</taxon>
        <taxon>Shewanella</taxon>
    </lineage>
</organism>
<name>PEPQ_SHEDO</name>
<dbReference type="EC" id="3.4.13.9" evidence="1"/>
<dbReference type="EMBL" id="CP000302">
    <property type="protein sequence ID" value="ABE53313.1"/>
    <property type="molecule type" value="Genomic_DNA"/>
</dbReference>
<dbReference type="RefSeq" id="WP_011494482.1">
    <property type="nucleotide sequence ID" value="NC_007954.1"/>
</dbReference>
<dbReference type="SMR" id="Q12TB3"/>
<dbReference type="STRING" id="318161.Sden_0016"/>
<dbReference type="MEROPS" id="M24.003"/>
<dbReference type="KEGG" id="sdn:Sden_0016"/>
<dbReference type="eggNOG" id="COG0006">
    <property type="taxonomic scope" value="Bacteria"/>
</dbReference>
<dbReference type="HOGENOM" id="CLU_050675_0_0_6"/>
<dbReference type="OrthoDB" id="9806388at2"/>
<dbReference type="Proteomes" id="UP000001982">
    <property type="component" value="Chromosome"/>
</dbReference>
<dbReference type="GO" id="GO:0005829">
    <property type="term" value="C:cytosol"/>
    <property type="evidence" value="ECO:0007669"/>
    <property type="project" value="TreeGrafter"/>
</dbReference>
<dbReference type="GO" id="GO:0004177">
    <property type="term" value="F:aminopeptidase activity"/>
    <property type="evidence" value="ECO:0007669"/>
    <property type="project" value="TreeGrafter"/>
</dbReference>
<dbReference type="GO" id="GO:0046872">
    <property type="term" value="F:metal ion binding"/>
    <property type="evidence" value="ECO:0007669"/>
    <property type="project" value="UniProtKB-KW"/>
</dbReference>
<dbReference type="GO" id="GO:0008235">
    <property type="term" value="F:metalloexopeptidase activity"/>
    <property type="evidence" value="ECO:0007669"/>
    <property type="project" value="UniProtKB-UniRule"/>
</dbReference>
<dbReference type="GO" id="GO:0016795">
    <property type="term" value="F:phosphoric triester hydrolase activity"/>
    <property type="evidence" value="ECO:0007669"/>
    <property type="project" value="InterPro"/>
</dbReference>
<dbReference type="GO" id="GO:0102009">
    <property type="term" value="F:proline dipeptidase activity"/>
    <property type="evidence" value="ECO:0007669"/>
    <property type="project" value="UniProtKB-EC"/>
</dbReference>
<dbReference type="GO" id="GO:0006508">
    <property type="term" value="P:proteolysis"/>
    <property type="evidence" value="ECO:0007669"/>
    <property type="project" value="UniProtKB-KW"/>
</dbReference>
<dbReference type="CDD" id="cd01087">
    <property type="entry name" value="Prolidase"/>
    <property type="match status" value="1"/>
</dbReference>
<dbReference type="Gene3D" id="3.90.230.10">
    <property type="entry name" value="Creatinase/methionine aminopeptidase superfamily"/>
    <property type="match status" value="1"/>
</dbReference>
<dbReference type="Gene3D" id="3.40.350.10">
    <property type="entry name" value="Creatinase/prolidase N-terminal domain"/>
    <property type="match status" value="1"/>
</dbReference>
<dbReference type="HAMAP" id="MF_01279">
    <property type="entry name" value="X_Pro_dipeptid"/>
    <property type="match status" value="1"/>
</dbReference>
<dbReference type="InterPro" id="IPR029149">
    <property type="entry name" value="Creatin/AminoP/Spt16_N"/>
</dbReference>
<dbReference type="InterPro" id="IPR036005">
    <property type="entry name" value="Creatinase/aminopeptidase-like"/>
</dbReference>
<dbReference type="InterPro" id="IPR048819">
    <property type="entry name" value="PepQ_N"/>
</dbReference>
<dbReference type="InterPro" id="IPR000994">
    <property type="entry name" value="Pept_M24"/>
</dbReference>
<dbReference type="InterPro" id="IPR001131">
    <property type="entry name" value="Peptidase_M24B_aminopep-P_CS"/>
</dbReference>
<dbReference type="InterPro" id="IPR052433">
    <property type="entry name" value="X-Pro_dipept-like"/>
</dbReference>
<dbReference type="InterPro" id="IPR022846">
    <property type="entry name" value="X_Pro_dipept"/>
</dbReference>
<dbReference type="NCBIfam" id="NF010133">
    <property type="entry name" value="PRK13607.1"/>
    <property type="match status" value="1"/>
</dbReference>
<dbReference type="PANTHER" id="PTHR43226">
    <property type="entry name" value="XAA-PRO AMINOPEPTIDASE 3"/>
    <property type="match status" value="1"/>
</dbReference>
<dbReference type="PANTHER" id="PTHR43226:SF8">
    <property type="entry name" value="XAA-PRO DIPEPTIDASE"/>
    <property type="match status" value="1"/>
</dbReference>
<dbReference type="Pfam" id="PF21216">
    <property type="entry name" value="PepQ_N"/>
    <property type="match status" value="1"/>
</dbReference>
<dbReference type="Pfam" id="PF00557">
    <property type="entry name" value="Peptidase_M24"/>
    <property type="match status" value="1"/>
</dbReference>
<dbReference type="SUPFAM" id="SSF55920">
    <property type="entry name" value="Creatinase/aminopeptidase"/>
    <property type="match status" value="1"/>
</dbReference>
<dbReference type="PROSITE" id="PS00491">
    <property type="entry name" value="PROLINE_PEPTIDASE"/>
    <property type="match status" value="1"/>
</dbReference>
<accession>Q12TB3</accession>